<protein>
    <recommendedName>
        <fullName evidence="1">Phosphoglycolate phosphatase</fullName>
        <shortName evidence="1">PGP</shortName>
        <shortName evidence="1">PGPase</shortName>
        <ecNumber evidence="1">3.1.3.18</ecNumber>
    </recommendedName>
</protein>
<reference key="1">
    <citation type="journal article" date="2005" name="Genome Res.">
        <title>Living with two extremes: conclusions from the genome sequence of Natronomonas pharaonis.</title>
        <authorList>
            <person name="Falb M."/>
            <person name="Pfeiffer F."/>
            <person name="Palm P."/>
            <person name="Rodewald K."/>
            <person name="Hickmann V."/>
            <person name="Tittor J."/>
            <person name="Oesterhelt D."/>
        </authorList>
    </citation>
    <scope>NUCLEOTIDE SEQUENCE [LARGE SCALE GENOMIC DNA]</scope>
    <source>
        <strain>ATCC 35678 / DSM 2160 / CIP 103997 / JCM 8858 / NBRC 14720 / NCIMB 2260 / Gabara</strain>
    </source>
</reference>
<name>PGP_NATPD</name>
<feature type="chain" id="PRO_1000024293" description="Phosphoglycolate phosphatase">
    <location>
        <begin position="1"/>
        <end position="226"/>
    </location>
</feature>
<feature type="active site" description="Nucleophile" evidence="1">
    <location>
        <position position="8"/>
    </location>
</feature>
<feature type="binding site" evidence="1">
    <location>
        <position position="8"/>
    </location>
    <ligand>
        <name>Mg(2+)</name>
        <dbReference type="ChEBI" id="CHEBI:18420"/>
    </ligand>
</feature>
<feature type="binding site" evidence="1">
    <location>
        <position position="10"/>
    </location>
    <ligand>
        <name>Mg(2+)</name>
        <dbReference type="ChEBI" id="CHEBI:18420"/>
    </ligand>
</feature>
<feature type="binding site" evidence="1">
    <location>
        <position position="152"/>
    </location>
    <ligand>
        <name>substrate</name>
    </ligand>
</feature>
<feature type="binding site" evidence="1">
    <location>
        <position position="175"/>
    </location>
    <ligand>
        <name>Mg(2+)</name>
        <dbReference type="ChEBI" id="CHEBI:18420"/>
    </ligand>
</feature>
<feature type="binding site" evidence="1">
    <location>
        <position position="179"/>
    </location>
    <ligand>
        <name>Mg(2+)</name>
        <dbReference type="ChEBI" id="CHEBI:18420"/>
    </ligand>
</feature>
<sequence length="226" mass="23777">MVAPLAVDIDGTLTRPDKSIDPRVFDAIRAWDDHVVIATGKSFPYPVGLCEFLGMPLNVIAENGGAVYVEPAGEVVYNGDPEGAAAVAEEYVAAGYDLGWGAVDMVNRWRETELAVDRDQPLEPLVAIADDHGMDVVDTGYAYHVKDAGVDKATGLETVAELLGVVPSSFIAIGDSENDAELLELAGTGFAVANADAHARGAADAVTDASFADGFLEALDRARDNR</sequence>
<keyword id="KW-0119">Carbohydrate metabolism</keyword>
<keyword id="KW-0378">Hydrolase</keyword>
<keyword id="KW-0460">Magnesium</keyword>
<keyword id="KW-0479">Metal-binding</keyword>
<keyword id="KW-1185">Reference proteome</keyword>
<comment type="function">
    <text evidence="1">Catalyzes the dephosphorylation of 2-phosphoglycolate.</text>
</comment>
<comment type="catalytic activity">
    <reaction evidence="1">
        <text>2-phosphoglycolate + H2O = glycolate + phosphate</text>
        <dbReference type="Rhea" id="RHEA:14369"/>
        <dbReference type="ChEBI" id="CHEBI:15377"/>
        <dbReference type="ChEBI" id="CHEBI:29805"/>
        <dbReference type="ChEBI" id="CHEBI:43474"/>
        <dbReference type="ChEBI" id="CHEBI:58033"/>
        <dbReference type="EC" id="3.1.3.18"/>
    </reaction>
</comment>
<comment type="cofactor">
    <cofactor evidence="1">
        <name>Mg(2+)</name>
        <dbReference type="ChEBI" id="CHEBI:18420"/>
    </cofactor>
</comment>
<comment type="similarity">
    <text evidence="1">Belongs to the archaeal SPP-like hydrolase family.</text>
</comment>
<accession>Q3ISC7</accession>
<dbReference type="EC" id="3.1.3.18" evidence="1"/>
<dbReference type="EMBL" id="CR936257">
    <property type="protein sequence ID" value="CAI48960.1"/>
    <property type="molecule type" value="Genomic_DNA"/>
</dbReference>
<dbReference type="RefSeq" id="WP_011322593.1">
    <property type="nucleotide sequence ID" value="NC_007426.1"/>
</dbReference>
<dbReference type="SMR" id="Q3ISC7"/>
<dbReference type="STRING" id="348780.NP_1738A"/>
<dbReference type="EnsemblBacteria" id="CAI48960">
    <property type="protein sequence ID" value="CAI48960"/>
    <property type="gene ID" value="NP_1738A"/>
</dbReference>
<dbReference type="GeneID" id="3701244"/>
<dbReference type="KEGG" id="nph:NP_1738A"/>
<dbReference type="eggNOG" id="arCOG01213">
    <property type="taxonomic scope" value="Archaea"/>
</dbReference>
<dbReference type="HOGENOM" id="CLU_044146_2_0_2"/>
<dbReference type="OrthoDB" id="120822at2157"/>
<dbReference type="Proteomes" id="UP000002698">
    <property type="component" value="Chromosome"/>
</dbReference>
<dbReference type="GO" id="GO:0005829">
    <property type="term" value="C:cytosol"/>
    <property type="evidence" value="ECO:0007669"/>
    <property type="project" value="TreeGrafter"/>
</dbReference>
<dbReference type="GO" id="GO:0000287">
    <property type="term" value="F:magnesium ion binding"/>
    <property type="evidence" value="ECO:0007669"/>
    <property type="project" value="InterPro"/>
</dbReference>
<dbReference type="GO" id="GO:0008967">
    <property type="term" value="F:phosphoglycolate phosphatase activity"/>
    <property type="evidence" value="ECO:0007669"/>
    <property type="project" value="UniProtKB-UniRule"/>
</dbReference>
<dbReference type="CDD" id="cd01427">
    <property type="entry name" value="HAD_like"/>
    <property type="match status" value="1"/>
</dbReference>
<dbReference type="CDD" id="cd07514">
    <property type="entry name" value="HAD_Pase"/>
    <property type="match status" value="1"/>
</dbReference>
<dbReference type="Gene3D" id="3.90.1070.10">
    <property type="match status" value="1"/>
</dbReference>
<dbReference type="Gene3D" id="3.40.50.1000">
    <property type="entry name" value="HAD superfamily/HAD-like"/>
    <property type="match status" value="1"/>
</dbReference>
<dbReference type="HAMAP" id="MF_01419">
    <property type="entry name" value="GPH_hydrolase_arch"/>
    <property type="match status" value="1"/>
</dbReference>
<dbReference type="InterPro" id="IPR036412">
    <property type="entry name" value="HAD-like_sf"/>
</dbReference>
<dbReference type="InterPro" id="IPR006379">
    <property type="entry name" value="HAD-SF_hydro_IIB"/>
</dbReference>
<dbReference type="InterPro" id="IPR023214">
    <property type="entry name" value="HAD_sf"/>
</dbReference>
<dbReference type="InterPro" id="IPR006382">
    <property type="entry name" value="PGPase"/>
</dbReference>
<dbReference type="NCBIfam" id="TIGR01484">
    <property type="entry name" value="HAD-SF-IIB"/>
    <property type="match status" value="1"/>
</dbReference>
<dbReference type="NCBIfam" id="TIGR01487">
    <property type="entry name" value="Pglycolate_arch"/>
    <property type="match status" value="1"/>
</dbReference>
<dbReference type="PANTHER" id="PTHR10000:SF8">
    <property type="entry name" value="HAD SUPERFAMILY HYDROLASE-LIKE, TYPE 3"/>
    <property type="match status" value="1"/>
</dbReference>
<dbReference type="PANTHER" id="PTHR10000">
    <property type="entry name" value="PHOSPHOSERINE PHOSPHATASE"/>
    <property type="match status" value="1"/>
</dbReference>
<dbReference type="Pfam" id="PF08282">
    <property type="entry name" value="Hydrolase_3"/>
    <property type="match status" value="2"/>
</dbReference>
<dbReference type="SUPFAM" id="SSF56784">
    <property type="entry name" value="HAD-like"/>
    <property type="match status" value="1"/>
</dbReference>
<organism>
    <name type="scientific">Natronomonas pharaonis (strain ATCC 35678 / DSM 2160 / CIP 103997 / JCM 8858 / NBRC 14720 / NCIMB 2260 / Gabara)</name>
    <name type="common">Halobacterium pharaonis</name>
    <dbReference type="NCBI Taxonomy" id="348780"/>
    <lineage>
        <taxon>Archaea</taxon>
        <taxon>Methanobacteriati</taxon>
        <taxon>Methanobacteriota</taxon>
        <taxon>Stenosarchaea group</taxon>
        <taxon>Halobacteria</taxon>
        <taxon>Halobacteriales</taxon>
        <taxon>Haloarculaceae</taxon>
        <taxon>Natronomonas</taxon>
    </lineage>
</organism>
<evidence type="ECO:0000255" key="1">
    <source>
        <dbReference type="HAMAP-Rule" id="MF_01419"/>
    </source>
</evidence>
<gene>
    <name type="ordered locus">NP_1738A</name>
</gene>
<proteinExistence type="inferred from homology"/>